<name>QUEC_CAMC5</name>
<reference key="1">
    <citation type="submission" date="2007-07" db="EMBL/GenBank/DDBJ databases">
        <title>Genome sequence of Campylobacter curvus 525.92 isolated from human feces.</title>
        <authorList>
            <person name="Fouts D.E."/>
            <person name="Mongodin E.F."/>
            <person name="Puiu D."/>
            <person name="Sebastian Y."/>
            <person name="Miller W.G."/>
            <person name="Mandrell R.E."/>
            <person name="Lastovica A.J."/>
            <person name="Nelson K.E."/>
        </authorList>
    </citation>
    <scope>NUCLEOTIDE SEQUENCE [LARGE SCALE GENOMIC DNA]</scope>
    <source>
        <strain>525.92</strain>
    </source>
</reference>
<evidence type="ECO:0000255" key="1">
    <source>
        <dbReference type="HAMAP-Rule" id="MF_01633"/>
    </source>
</evidence>
<feature type="chain" id="PRO_0000336900" description="7-cyano-7-deazaguanine synthase">
    <location>
        <begin position="1"/>
        <end position="223"/>
    </location>
</feature>
<feature type="binding site" evidence="1">
    <location>
        <begin position="8"/>
        <end position="18"/>
    </location>
    <ligand>
        <name>ATP</name>
        <dbReference type="ChEBI" id="CHEBI:30616"/>
    </ligand>
</feature>
<feature type="binding site" evidence="1">
    <location>
        <position position="187"/>
    </location>
    <ligand>
        <name>Zn(2+)</name>
        <dbReference type="ChEBI" id="CHEBI:29105"/>
    </ligand>
</feature>
<feature type="binding site" evidence="1">
    <location>
        <position position="195"/>
    </location>
    <ligand>
        <name>Zn(2+)</name>
        <dbReference type="ChEBI" id="CHEBI:29105"/>
    </ligand>
</feature>
<feature type="binding site" evidence="1">
    <location>
        <position position="198"/>
    </location>
    <ligand>
        <name>Zn(2+)</name>
        <dbReference type="ChEBI" id="CHEBI:29105"/>
    </ligand>
</feature>
<feature type="binding site" evidence="1">
    <location>
        <position position="201"/>
    </location>
    <ligand>
        <name>Zn(2+)</name>
        <dbReference type="ChEBI" id="CHEBI:29105"/>
    </ligand>
</feature>
<sequence>MKKAVCIMSGGMDSTLCAVMAKREGYEIIALHFDYEQRTMRREKMAFEQICDYLGIKKRLNLDVSFIADIGGNALTDKNLAVSKSGLGDEIPNTYVPFRNGIFISIAAALAEKEGAQAIYIGVVEEDSSGYPDCKGEFIERMNAAINVGTAPETKIKIVTPLVNLSKADIVAKSLEFGSPLELTWSCYEREDEACGLCDSCRLRLRGFERAGVKDKIKYANLS</sequence>
<accession>A7GXH1</accession>
<comment type="function">
    <text evidence="1">Catalyzes the ATP-dependent conversion of 7-carboxy-7-deazaguanine (CDG) to 7-cyano-7-deazaguanine (preQ(0)).</text>
</comment>
<comment type="catalytic activity">
    <reaction evidence="1">
        <text>7-carboxy-7-deazaguanine + NH4(+) + ATP = 7-cyano-7-deazaguanine + ADP + phosphate + H2O + H(+)</text>
        <dbReference type="Rhea" id="RHEA:27982"/>
        <dbReference type="ChEBI" id="CHEBI:15377"/>
        <dbReference type="ChEBI" id="CHEBI:15378"/>
        <dbReference type="ChEBI" id="CHEBI:28938"/>
        <dbReference type="ChEBI" id="CHEBI:30616"/>
        <dbReference type="ChEBI" id="CHEBI:43474"/>
        <dbReference type="ChEBI" id="CHEBI:45075"/>
        <dbReference type="ChEBI" id="CHEBI:61036"/>
        <dbReference type="ChEBI" id="CHEBI:456216"/>
        <dbReference type="EC" id="6.3.4.20"/>
    </reaction>
</comment>
<comment type="cofactor">
    <cofactor evidence="1">
        <name>Zn(2+)</name>
        <dbReference type="ChEBI" id="CHEBI:29105"/>
    </cofactor>
    <text evidence="1">Binds 1 zinc ion per subunit.</text>
</comment>
<comment type="pathway">
    <text evidence="1">Purine metabolism; 7-cyano-7-deazaguanine biosynthesis.</text>
</comment>
<comment type="similarity">
    <text evidence="1">Belongs to the QueC family.</text>
</comment>
<dbReference type="EC" id="6.3.4.20" evidence="1"/>
<dbReference type="EMBL" id="CP000767">
    <property type="protein sequence ID" value="EAU00756.1"/>
    <property type="molecule type" value="Genomic_DNA"/>
</dbReference>
<dbReference type="RefSeq" id="WP_011992065.1">
    <property type="nucleotide sequence ID" value="NC_009715.2"/>
</dbReference>
<dbReference type="SMR" id="A7GXH1"/>
<dbReference type="STRING" id="360105.CCV52592_0448"/>
<dbReference type="KEGG" id="ccv:CCV52592_0448"/>
<dbReference type="HOGENOM" id="CLU_081854_1_0_7"/>
<dbReference type="OrthoDB" id="9789567at2"/>
<dbReference type="UniPathway" id="UPA00391"/>
<dbReference type="Proteomes" id="UP000006380">
    <property type="component" value="Chromosome"/>
</dbReference>
<dbReference type="GO" id="GO:0005524">
    <property type="term" value="F:ATP binding"/>
    <property type="evidence" value="ECO:0007669"/>
    <property type="project" value="UniProtKB-UniRule"/>
</dbReference>
<dbReference type="GO" id="GO:0016879">
    <property type="term" value="F:ligase activity, forming carbon-nitrogen bonds"/>
    <property type="evidence" value="ECO:0007669"/>
    <property type="project" value="UniProtKB-UniRule"/>
</dbReference>
<dbReference type="GO" id="GO:0008270">
    <property type="term" value="F:zinc ion binding"/>
    <property type="evidence" value="ECO:0007669"/>
    <property type="project" value="UniProtKB-UniRule"/>
</dbReference>
<dbReference type="GO" id="GO:0008616">
    <property type="term" value="P:queuosine biosynthetic process"/>
    <property type="evidence" value="ECO:0007669"/>
    <property type="project" value="UniProtKB-UniRule"/>
</dbReference>
<dbReference type="CDD" id="cd01995">
    <property type="entry name" value="QueC-like"/>
    <property type="match status" value="1"/>
</dbReference>
<dbReference type="Gene3D" id="3.40.50.620">
    <property type="entry name" value="HUPs"/>
    <property type="match status" value="1"/>
</dbReference>
<dbReference type="HAMAP" id="MF_01633">
    <property type="entry name" value="QueC"/>
    <property type="match status" value="1"/>
</dbReference>
<dbReference type="InterPro" id="IPR018317">
    <property type="entry name" value="QueC"/>
</dbReference>
<dbReference type="InterPro" id="IPR014729">
    <property type="entry name" value="Rossmann-like_a/b/a_fold"/>
</dbReference>
<dbReference type="NCBIfam" id="TIGR00364">
    <property type="entry name" value="7-cyano-7-deazaguanine synthase QueC"/>
    <property type="match status" value="1"/>
</dbReference>
<dbReference type="PANTHER" id="PTHR42914">
    <property type="entry name" value="7-CYANO-7-DEAZAGUANINE SYNTHASE"/>
    <property type="match status" value="1"/>
</dbReference>
<dbReference type="PANTHER" id="PTHR42914:SF1">
    <property type="entry name" value="7-CYANO-7-DEAZAGUANINE SYNTHASE"/>
    <property type="match status" value="1"/>
</dbReference>
<dbReference type="Pfam" id="PF06508">
    <property type="entry name" value="QueC"/>
    <property type="match status" value="1"/>
</dbReference>
<dbReference type="PIRSF" id="PIRSF006293">
    <property type="entry name" value="ExsB"/>
    <property type="match status" value="1"/>
</dbReference>
<dbReference type="SUPFAM" id="SSF52402">
    <property type="entry name" value="Adenine nucleotide alpha hydrolases-like"/>
    <property type="match status" value="1"/>
</dbReference>
<organism>
    <name type="scientific">Campylobacter curvus (strain 525.92)</name>
    <dbReference type="NCBI Taxonomy" id="360105"/>
    <lineage>
        <taxon>Bacteria</taxon>
        <taxon>Pseudomonadati</taxon>
        <taxon>Campylobacterota</taxon>
        <taxon>Epsilonproteobacteria</taxon>
        <taxon>Campylobacterales</taxon>
        <taxon>Campylobacteraceae</taxon>
        <taxon>Campylobacter</taxon>
    </lineage>
</organism>
<gene>
    <name evidence="1" type="primary">queC</name>
    <name type="ordered locus">Ccur92_06090</name>
    <name type="ORF">CCV52592_0448</name>
</gene>
<proteinExistence type="inferred from homology"/>
<protein>
    <recommendedName>
        <fullName evidence="1">7-cyano-7-deazaguanine synthase</fullName>
        <ecNumber evidence="1">6.3.4.20</ecNumber>
    </recommendedName>
    <alternativeName>
        <fullName evidence="1">7-cyano-7-carbaguanine synthase</fullName>
    </alternativeName>
    <alternativeName>
        <fullName evidence="1">PreQ(0) synthase</fullName>
    </alternativeName>
    <alternativeName>
        <fullName evidence="1">Queuosine biosynthesis protein QueC</fullName>
    </alternativeName>
</protein>
<keyword id="KW-0067">ATP-binding</keyword>
<keyword id="KW-0436">Ligase</keyword>
<keyword id="KW-0479">Metal-binding</keyword>
<keyword id="KW-0547">Nucleotide-binding</keyword>
<keyword id="KW-0671">Queuosine biosynthesis</keyword>
<keyword id="KW-1185">Reference proteome</keyword>
<keyword id="KW-0862">Zinc</keyword>